<feature type="chain" id="PRO_0000207885" description="Protein PsbN">
    <location>
        <begin position="1"/>
        <end position="44"/>
    </location>
</feature>
<feature type="transmembrane region" description="Helical" evidence="1">
    <location>
        <begin position="6"/>
        <end position="26"/>
    </location>
</feature>
<dbReference type="EMBL" id="AB001684">
    <property type="protein sequence ID" value="BAA57923.1"/>
    <property type="molecule type" value="Genomic_DNA"/>
</dbReference>
<dbReference type="PIR" id="T07275">
    <property type="entry name" value="T07275"/>
</dbReference>
<dbReference type="RefSeq" id="NP_045847.1">
    <property type="nucleotide sequence ID" value="NC_001865.1"/>
</dbReference>
<dbReference type="SMR" id="P56326"/>
<dbReference type="GeneID" id="809161"/>
<dbReference type="OrthoDB" id="1860403at2759"/>
<dbReference type="GO" id="GO:0009535">
    <property type="term" value="C:chloroplast thylakoid membrane"/>
    <property type="evidence" value="ECO:0007669"/>
    <property type="project" value="UniProtKB-SubCell"/>
</dbReference>
<dbReference type="GO" id="GO:0015979">
    <property type="term" value="P:photosynthesis"/>
    <property type="evidence" value="ECO:0007669"/>
    <property type="project" value="InterPro"/>
</dbReference>
<dbReference type="HAMAP" id="MF_00293">
    <property type="entry name" value="PSII_PsbN"/>
    <property type="match status" value="1"/>
</dbReference>
<dbReference type="InterPro" id="IPR003398">
    <property type="entry name" value="PSII_PsbN"/>
</dbReference>
<dbReference type="PANTHER" id="PTHR35326">
    <property type="entry name" value="PROTEIN PSBN"/>
    <property type="match status" value="1"/>
</dbReference>
<dbReference type="PANTHER" id="PTHR35326:SF3">
    <property type="entry name" value="PROTEIN PSBN"/>
    <property type="match status" value="1"/>
</dbReference>
<dbReference type="Pfam" id="PF02468">
    <property type="entry name" value="PsbN"/>
    <property type="match status" value="1"/>
</dbReference>
<geneLocation type="chloroplast"/>
<evidence type="ECO:0000255" key="1">
    <source>
        <dbReference type="HAMAP-Rule" id="MF_00293"/>
    </source>
</evidence>
<proteinExistence type="inferred from homology"/>
<organism>
    <name type="scientific">Chlorella vulgaris</name>
    <name type="common">Green alga</name>
    <dbReference type="NCBI Taxonomy" id="3077"/>
    <lineage>
        <taxon>Eukaryota</taxon>
        <taxon>Viridiplantae</taxon>
        <taxon>Chlorophyta</taxon>
        <taxon>core chlorophytes</taxon>
        <taxon>Trebouxiophyceae</taxon>
        <taxon>Chlorellales</taxon>
        <taxon>Chlorellaceae</taxon>
        <taxon>Chlorella clade</taxon>
        <taxon>Chlorella</taxon>
    </lineage>
</organism>
<keyword id="KW-0150">Chloroplast</keyword>
<keyword id="KW-0472">Membrane</keyword>
<keyword id="KW-0934">Plastid</keyword>
<keyword id="KW-0793">Thylakoid</keyword>
<keyword id="KW-0812">Transmembrane</keyword>
<keyword id="KW-1133">Transmembrane helix</keyword>
<reference key="1">
    <citation type="journal article" date="1997" name="Proc. Natl. Acad. Sci. U.S.A.">
        <title>Complete nucleotide sequence of the chloroplast genome from the green alga Chlorella vulgaris: the existence of genes possibly involved in chloroplast division.</title>
        <authorList>
            <person name="Wakasugi T."/>
            <person name="Nagai T."/>
            <person name="Kapoor M."/>
            <person name="Sugita M."/>
            <person name="Ito M."/>
            <person name="Ito S."/>
            <person name="Tsudzuki J."/>
            <person name="Nakashima K."/>
            <person name="Tsudzuki T."/>
            <person name="Suzuki Y."/>
            <person name="Hamada A."/>
            <person name="Ohta T."/>
            <person name="Inamura A."/>
            <person name="Yoshinaga K."/>
            <person name="Sugiura M."/>
        </authorList>
    </citation>
    <scope>NUCLEOTIDE SEQUENCE [LARGE SCALE GENOMIC DNA]</scope>
    <source>
        <strain>IAM C-27 / Tamiya</strain>
    </source>
</reference>
<name>PSBN_CHLVU</name>
<comment type="function">
    <text evidence="1">May play a role in photosystem I and II biogenesis.</text>
</comment>
<comment type="subcellular location">
    <subcellularLocation>
        <location evidence="1">Plastid</location>
        <location evidence="1">Chloroplast thylakoid membrane</location>
        <topology evidence="1">Single-pass membrane protein</topology>
    </subcellularLocation>
</comment>
<comment type="similarity">
    <text evidence="1">Belongs to the PsbN family.</text>
</comment>
<comment type="caution">
    <text evidence="1">Originally thought to be a component of PSII; based on experiments in Synechocystis, N.tabacum and barley, and its absence from PSII in T.elongatus and T.vulcanus, this is probably not true.</text>
</comment>
<accession>P56326</accession>
<protein>
    <recommendedName>
        <fullName evidence="1">Protein PsbN</fullName>
    </recommendedName>
</protein>
<gene>
    <name evidence="1" type="primary">psbN</name>
</gene>
<sequence>MDSPAFFFTIFLWCLLLSITGYSIYVGFGPPSQQLRDPFEEHED</sequence>